<sequence length="510" mass="58972">MAVSFLRIPIPSRVFWYPTRLIRVTPALLRFSSSAAFQPSSTSLSPPSSDNFLADKWESYRKKKVVIRIGYVGTDYRGLQIQRDDPSIKTIEGELEVAIYKAGGIRDSNYGDLHKIGWARSSRTDKGVHSLATSISLKMEIPETAWKDDPQGTVLAKCISKHLPENIRVFSVLPSNRRFDPRRECTLRKYSYLLPVDVLGIKNSFTSDEIDYHITDFNEILKEFEGEYPFHNYTQRSRYRRKSEQKIKQRNGRPPREPKSIKASESEFREENHIEIGEEEEEKEVDGESDEHVVTPDSDNSQVYSRAKWLYEPDETDKISGAHFRKVFRCRSGKLENSLGFGFVEISIWGESFMLHQIRKMIGTAVAVKRELLPRDIIRLSLNKFTRIVLPLAPSEVLILRGNSFEVRRLPERPGMEATGESEEVEKEIEEFYRAVMVPQVSIFLDSEKSPWKEWVDHLDRNDGLIDEELEDVRKGWEEWKAAKPWMNLKKTEDDEEALSSVSVPIHQAL</sequence>
<protein>
    <recommendedName>
        <fullName>Putative tRNA pseudouridine synthase</fullName>
        <ecNumber>5.4.99.-</ecNumber>
    </recommendedName>
    <alternativeName>
        <fullName>tRNA pseudouridylate synthase</fullName>
    </alternativeName>
    <alternativeName>
        <fullName>tRNA-uridine isomerase</fullName>
    </alternativeName>
</protein>
<reference key="1">
    <citation type="journal article" date="1999" name="Nature">
        <title>Sequence and analysis of chromosome 2 of the plant Arabidopsis thaliana.</title>
        <authorList>
            <person name="Lin X."/>
            <person name="Kaul S."/>
            <person name="Rounsley S.D."/>
            <person name="Shea T.P."/>
            <person name="Benito M.-I."/>
            <person name="Town C.D."/>
            <person name="Fujii C.Y."/>
            <person name="Mason T.M."/>
            <person name="Bowman C.L."/>
            <person name="Barnstead M.E."/>
            <person name="Feldblyum T.V."/>
            <person name="Buell C.R."/>
            <person name="Ketchum K.A."/>
            <person name="Lee J.J."/>
            <person name="Ronning C.M."/>
            <person name="Koo H.L."/>
            <person name="Moffat K.S."/>
            <person name="Cronin L.A."/>
            <person name="Shen M."/>
            <person name="Pai G."/>
            <person name="Van Aken S."/>
            <person name="Umayam L."/>
            <person name="Tallon L.J."/>
            <person name="Gill J.E."/>
            <person name="Adams M.D."/>
            <person name="Carrera A.J."/>
            <person name="Creasy T.H."/>
            <person name="Goodman H.M."/>
            <person name="Somerville C.R."/>
            <person name="Copenhaver G.P."/>
            <person name="Preuss D."/>
            <person name="Nierman W.C."/>
            <person name="White O."/>
            <person name="Eisen J.A."/>
            <person name="Salzberg S.L."/>
            <person name="Fraser C.M."/>
            <person name="Venter J.C."/>
        </authorList>
    </citation>
    <scope>NUCLEOTIDE SEQUENCE [LARGE SCALE GENOMIC DNA]</scope>
    <source>
        <strain>cv. Columbia</strain>
    </source>
</reference>
<reference key="2">
    <citation type="journal article" date="2017" name="Plant J.">
        <title>Araport11: a complete reannotation of the Arabidopsis thaliana reference genome.</title>
        <authorList>
            <person name="Cheng C.Y."/>
            <person name="Krishnakumar V."/>
            <person name="Chan A.P."/>
            <person name="Thibaud-Nissen F."/>
            <person name="Schobel S."/>
            <person name="Town C.D."/>
        </authorList>
    </citation>
    <scope>GENOME REANNOTATION</scope>
    <source>
        <strain>cv. Columbia</strain>
    </source>
</reference>
<evidence type="ECO:0000250" key="1"/>
<evidence type="ECO:0000256" key="2">
    <source>
        <dbReference type="SAM" id="MobiDB-lite"/>
    </source>
</evidence>
<evidence type="ECO:0000305" key="3"/>
<proteinExistence type="inferred from homology"/>
<keyword id="KW-0413">Isomerase</keyword>
<keyword id="KW-1185">Reference proteome</keyword>
<keyword id="KW-0819">tRNA processing</keyword>
<organism>
    <name type="scientific">Arabidopsis thaliana</name>
    <name type="common">Mouse-ear cress</name>
    <dbReference type="NCBI Taxonomy" id="3702"/>
    <lineage>
        <taxon>Eukaryota</taxon>
        <taxon>Viridiplantae</taxon>
        <taxon>Streptophyta</taxon>
        <taxon>Embryophyta</taxon>
        <taxon>Tracheophyta</taxon>
        <taxon>Spermatophyta</taxon>
        <taxon>Magnoliopsida</taxon>
        <taxon>eudicotyledons</taxon>
        <taxon>Gunneridae</taxon>
        <taxon>Pentapetalae</taxon>
        <taxon>rosids</taxon>
        <taxon>malvids</taxon>
        <taxon>Brassicales</taxon>
        <taxon>Brassicaceae</taxon>
        <taxon>Camelineae</taxon>
        <taxon>Arabidopsis</taxon>
    </lineage>
</organism>
<gene>
    <name type="ordered locus">At2g30320</name>
    <name type="ORF">T09D09.13</name>
</gene>
<accession>O22928</accession>
<feature type="chain" id="PRO_0000057533" description="Putative tRNA pseudouridine synthase">
    <location>
        <begin position="1"/>
        <end position="510"/>
    </location>
</feature>
<feature type="region of interest" description="Disordered" evidence="2">
    <location>
        <begin position="235"/>
        <end position="300"/>
    </location>
</feature>
<feature type="compositionally biased region" description="Basic and acidic residues" evidence="2">
    <location>
        <begin position="254"/>
        <end position="276"/>
    </location>
</feature>
<feature type="compositionally biased region" description="Acidic residues" evidence="2">
    <location>
        <begin position="277"/>
        <end position="289"/>
    </location>
</feature>
<feature type="active site" description="Nucleophile" evidence="1">
    <location>
        <position position="125"/>
    </location>
</feature>
<feature type="binding site" evidence="1">
    <location>
        <position position="190"/>
    </location>
    <ligand>
        <name>substrate</name>
    </ligand>
</feature>
<comment type="catalytic activity">
    <reaction>
        <text>a uridine in tRNA = a pseudouridine in tRNA</text>
        <dbReference type="Rhea" id="RHEA:54572"/>
        <dbReference type="Rhea" id="RHEA-COMP:13339"/>
        <dbReference type="Rhea" id="RHEA-COMP:13934"/>
        <dbReference type="ChEBI" id="CHEBI:65314"/>
        <dbReference type="ChEBI" id="CHEBI:65315"/>
    </reaction>
</comment>
<comment type="similarity">
    <text evidence="3">Belongs to the tRNA pseudouridine synthase TruA family.</text>
</comment>
<name>PUSH_ARATH</name>
<dbReference type="EC" id="5.4.99.-"/>
<dbReference type="EMBL" id="AC002338">
    <property type="protein sequence ID" value="AAC16945.1"/>
    <property type="molecule type" value="Genomic_DNA"/>
</dbReference>
<dbReference type="EMBL" id="CP002685">
    <property type="protein sequence ID" value="AEC08370.1"/>
    <property type="molecule type" value="Genomic_DNA"/>
</dbReference>
<dbReference type="PIR" id="A84707">
    <property type="entry name" value="A84707"/>
</dbReference>
<dbReference type="RefSeq" id="NP_180591.1">
    <property type="nucleotide sequence ID" value="NM_128585.2"/>
</dbReference>
<dbReference type="SMR" id="O22928"/>
<dbReference type="BioGRID" id="2931">
    <property type="interactions" value="2"/>
</dbReference>
<dbReference type="FunCoup" id="O22928">
    <property type="interactions" value="151"/>
</dbReference>
<dbReference type="STRING" id="3702.O22928"/>
<dbReference type="GlyGen" id="O22928">
    <property type="glycosylation" value="1 site"/>
</dbReference>
<dbReference type="iPTMnet" id="O22928"/>
<dbReference type="PaxDb" id="3702-AT2G30320.1"/>
<dbReference type="ProteomicsDB" id="236542"/>
<dbReference type="EnsemblPlants" id="AT2G30320.1">
    <property type="protein sequence ID" value="AT2G30320.1"/>
    <property type="gene ID" value="AT2G30320"/>
</dbReference>
<dbReference type="GeneID" id="817582"/>
<dbReference type="Gramene" id="AT2G30320.1">
    <property type="protein sequence ID" value="AT2G30320.1"/>
    <property type="gene ID" value="AT2G30320"/>
</dbReference>
<dbReference type="KEGG" id="ath:AT2G30320"/>
<dbReference type="Araport" id="AT2G30320"/>
<dbReference type="TAIR" id="AT2G30320"/>
<dbReference type="eggNOG" id="KOG2553">
    <property type="taxonomic scope" value="Eukaryota"/>
</dbReference>
<dbReference type="HOGENOM" id="CLU_023331_0_0_1"/>
<dbReference type="InParanoid" id="O22928"/>
<dbReference type="OMA" id="VIGIKSH"/>
<dbReference type="PhylomeDB" id="O22928"/>
<dbReference type="PRO" id="PR:O22928"/>
<dbReference type="Proteomes" id="UP000006548">
    <property type="component" value="Chromosome 2"/>
</dbReference>
<dbReference type="ExpressionAtlas" id="O22928">
    <property type="expression patterns" value="baseline and differential"/>
</dbReference>
<dbReference type="GO" id="GO:0009982">
    <property type="term" value="F:pseudouridine synthase activity"/>
    <property type="evidence" value="ECO:0000304"/>
    <property type="project" value="TAIR"/>
</dbReference>
<dbReference type="GO" id="GO:0003723">
    <property type="term" value="F:RNA binding"/>
    <property type="evidence" value="ECO:0007669"/>
    <property type="project" value="InterPro"/>
</dbReference>
<dbReference type="GO" id="GO:0106029">
    <property type="term" value="F:tRNA pseudouridine synthase activity"/>
    <property type="evidence" value="ECO:0007669"/>
    <property type="project" value="RHEA"/>
</dbReference>
<dbReference type="GO" id="GO:0031119">
    <property type="term" value="P:tRNA pseudouridine synthesis"/>
    <property type="evidence" value="ECO:0007669"/>
    <property type="project" value="InterPro"/>
</dbReference>
<dbReference type="CDD" id="cd02568">
    <property type="entry name" value="PseudoU_synth_PUS1_PUS2"/>
    <property type="match status" value="1"/>
</dbReference>
<dbReference type="FunFam" id="3.30.70.580:FF:000002">
    <property type="entry name" value="tRNA pseudouridine synthase"/>
    <property type="match status" value="1"/>
</dbReference>
<dbReference type="Gene3D" id="3.30.70.660">
    <property type="entry name" value="Pseudouridine synthase I, catalytic domain, C-terminal subdomain"/>
    <property type="match status" value="1"/>
</dbReference>
<dbReference type="Gene3D" id="3.30.70.580">
    <property type="entry name" value="Pseudouridine synthase I, catalytic domain, N-terminal subdomain"/>
    <property type="match status" value="1"/>
</dbReference>
<dbReference type="InterPro" id="IPR020103">
    <property type="entry name" value="PsdUridine_synth_cat_dom_sf"/>
</dbReference>
<dbReference type="InterPro" id="IPR001406">
    <property type="entry name" value="PsdUridine_synth_TruA"/>
</dbReference>
<dbReference type="InterPro" id="IPR020097">
    <property type="entry name" value="PsdUridine_synth_TruA_a/b_dom"/>
</dbReference>
<dbReference type="InterPro" id="IPR020095">
    <property type="entry name" value="PsdUridine_synth_TruA_C"/>
</dbReference>
<dbReference type="InterPro" id="IPR041708">
    <property type="entry name" value="PUS1/PUS2-like"/>
</dbReference>
<dbReference type="InterPro" id="IPR020094">
    <property type="entry name" value="TruA/RsuA/RluB/E/F_N"/>
</dbReference>
<dbReference type="PANTHER" id="PTHR11142">
    <property type="entry name" value="PSEUDOURIDYLATE SYNTHASE"/>
    <property type="match status" value="1"/>
</dbReference>
<dbReference type="PANTHER" id="PTHR11142:SF9">
    <property type="entry name" value="TRNA PSEUDOURIDINE SYNTHASE-RELATED"/>
    <property type="match status" value="1"/>
</dbReference>
<dbReference type="Pfam" id="PF01416">
    <property type="entry name" value="PseudoU_synth_1"/>
    <property type="match status" value="1"/>
</dbReference>
<dbReference type="SUPFAM" id="SSF55120">
    <property type="entry name" value="Pseudouridine synthase"/>
    <property type="match status" value="1"/>
</dbReference>